<organism>
    <name type="scientific">Thermotoga maritima (strain ATCC 43589 / DSM 3109 / JCM 10099 / NBRC 100826 / MSB8)</name>
    <dbReference type="NCBI Taxonomy" id="243274"/>
    <lineage>
        <taxon>Bacteria</taxon>
        <taxon>Thermotogati</taxon>
        <taxon>Thermotogota</taxon>
        <taxon>Thermotogae</taxon>
        <taxon>Thermotogales</taxon>
        <taxon>Thermotogaceae</taxon>
        <taxon>Thermotoga</taxon>
    </lineage>
</organism>
<feature type="chain" id="PRO_0000153273" description="Glutamine synthetase">
    <location>
        <begin position="1"/>
        <end position="439"/>
    </location>
</feature>
<feature type="domain" description="GS beta-grasp" evidence="5">
    <location>
        <begin position="13"/>
        <end position="98"/>
    </location>
</feature>
<feature type="domain" description="GS catalytic" evidence="6">
    <location>
        <begin position="105"/>
        <end position="439"/>
    </location>
</feature>
<feature type="binding site" evidence="2">
    <location>
        <position position="128"/>
    </location>
    <ligand>
        <name>Mg(2+)</name>
        <dbReference type="ChEBI" id="CHEBI:18420"/>
        <label>1</label>
    </ligand>
</feature>
<feature type="binding site" evidence="2">
    <location>
        <position position="130"/>
    </location>
    <ligand>
        <name>Mg(2+)</name>
        <dbReference type="ChEBI" id="CHEBI:18420"/>
        <label>2</label>
    </ligand>
</feature>
<feature type="binding site" evidence="4">
    <location>
        <position position="180"/>
    </location>
    <ligand>
        <name>ATP</name>
        <dbReference type="ChEBI" id="CHEBI:30616"/>
    </ligand>
</feature>
<feature type="binding site" evidence="2">
    <location>
        <position position="185"/>
    </location>
    <ligand>
        <name>Mg(2+)</name>
        <dbReference type="ChEBI" id="CHEBI:18420"/>
        <label>2</label>
    </ligand>
</feature>
<feature type="binding site" evidence="2">
    <location>
        <position position="192"/>
    </location>
    <ligand>
        <name>Mg(2+)</name>
        <dbReference type="ChEBI" id="CHEBI:18420"/>
        <label>2</label>
    </ligand>
</feature>
<feature type="binding site" evidence="4">
    <location>
        <begin position="236"/>
        <end position="237"/>
    </location>
    <ligand>
        <name>L-glutamate</name>
        <dbReference type="ChEBI" id="CHEBI:29985"/>
    </ligand>
</feature>
<feature type="binding site" evidence="2">
    <location>
        <position position="237"/>
    </location>
    <ligand>
        <name>L-glutamate</name>
        <dbReference type="ChEBI" id="CHEBI:29985"/>
    </ligand>
</feature>
<feature type="binding site" evidence="2">
    <location>
        <position position="241"/>
    </location>
    <ligand>
        <name>Mg(2+)</name>
        <dbReference type="ChEBI" id="CHEBI:18420"/>
        <label>1</label>
    </ligand>
</feature>
<feature type="binding site" evidence="4">
    <location>
        <begin position="243"/>
        <end position="245"/>
    </location>
    <ligand>
        <name>ATP</name>
        <dbReference type="ChEBI" id="CHEBI:30616"/>
    </ligand>
</feature>
<feature type="binding site" evidence="3">
    <location>
        <position position="245"/>
    </location>
    <ligand>
        <name>ATP</name>
        <dbReference type="ChEBI" id="CHEBI:30616"/>
    </ligand>
</feature>
<feature type="binding site" evidence="1">
    <location>
        <position position="294"/>
    </location>
    <ligand>
        <name>L-glutamate</name>
        <dbReference type="ChEBI" id="CHEBI:29985"/>
    </ligand>
</feature>
<feature type="binding site" evidence="1">
    <location>
        <position position="300"/>
    </location>
    <ligand>
        <name>L-glutamate</name>
        <dbReference type="ChEBI" id="CHEBI:29985"/>
    </ligand>
</feature>
<feature type="binding site" evidence="4">
    <location>
        <position position="312"/>
    </location>
    <ligand>
        <name>ATP</name>
        <dbReference type="ChEBI" id="CHEBI:30616"/>
    </ligand>
</feature>
<feature type="binding site" evidence="4">
    <location>
        <position position="312"/>
    </location>
    <ligand>
        <name>L-glutamate</name>
        <dbReference type="ChEBI" id="CHEBI:29985"/>
    </ligand>
</feature>
<feature type="binding site" evidence="4">
    <location>
        <position position="317"/>
    </location>
    <ligand>
        <name>ATP</name>
        <dbReference type="ChEBI" id="CHEBI:30616"/>
    </ligand>
</feature>
<feature type="binding site" evidence="3">
    <location>
        <position position="324"/>
    </location>
    <ligand>
        <name>ATP</name>
        <dbReference type="ChEBI" id="CHEBI:30616"/>
    </ligand>
</feature>
<feature type="binding site" evidence="2">
    <location>
        <position position="329"/>
    </location>
    <ligand>
        <name>Mg(2+)</name>
        <dbReference type="ChEBI" id="CHEBI:18420"/>
        <label>1</label>
    </ligand>
</feature>
<feature type="binding site" evidence="1">
    <location>
        <position position="331"/>
    </location>
    <ligand>
        <name>L-glutamate</name>
        <dbReference type="ChEBI" id="CHEBI:29985"/>
    </ligand>
</feature>
<feature type="site" description="Important for inhibition by glutamine" evidence="2">
    <location>
        <position position="59"/>
    </location>
</feature>
<feature type="sequence conflict" description="In Ref. 1; CAA42729." evidence="8" ref="1">
    <original>A</original>
    <variation>G</variation>
    <location>
        <position position="204"/>
    </location>
</feature>
<feature type="sequence conflict" description="In Ref. 1; CAA42729." evidence="8" ref="1">
    <original>A</original>
    <variation>R</variation>
    <location>
        <position position="280"/>
    </location>
</feature>
<feature type="sequence conflict" description="In Ref. 1; CAA42729." evidence="8" ref="1">
    <original>S</original>
    <variation>T</variation>
    <location>
        <position position="336"/>
    </location>
</feature>
<gene>
    <name evidence="7" type="primary">glnA</name>
    <name type="ordered locus">TM_0943</name>
</gene>
<proteinExistence type="inferred from homology"/>
<keyword id="KW-0067">ATP-binding</keyword>
<keyword id="KW-0963">Cytoplasm</keyword>
<keyword id="KW-0436">Ligase</keyword>
<keyword id="KW-0460">Magnesium</keyword>
<keyword id="KW-0479">Metal-binding</keyword>
<keyword id="KW-0547">Nucleotide-binding</keyword>
<keyword id="KW-1185">Reference proteome</keyword>
<accession>P36205</accession>
<name>GLN1A_THEMA</name>
<evidence type="ECO:0000250" key="1">
    <source>
        <dbReference type="UniProtKB" id="P0A1P6"/>
    </source>
</evidence>
<evidence type="ECO:0000250" key="2">
    <source>
        <dbReference type="UniProtKB" id="P12425"/>
    </source>
</evidence>
<evidence type="ECO:0000250" key="3">
    <source>
        <dbReference type="UniProtKB" id="P77961"/>
    </source>
</evidence>
<evidence type="ECO:0000250" key="4">
    <source>
        <dbReference type="UniProtKB" id="P9WN39"/>
    </source>
</evidence>
<evidence type="ECO:0000255" key="5">
    <source>
        <dbReference type="PROSITE-ProRule" id="PRU01330"/>
    </source>
</evidence>
<evidence type="ECO:0000255" key="6">
    <source>
        <dbReference type="PROSITE-ProRule" id="PRU01331"/>
    </source>
</evidence>
<evidence type="ECO:0000303" key="7">
    <source>
    </source>
</evidence>
<evidence type="ECO:0000305" key="8"/>
<reference key="1">
    <citation type="journal article" date="1992" name="J. Gen. Microbiol.">
        <title>The glnA gene of the extremely thermophilic eubacterium Thermotoga maritima: cloning, primary structure, and expression in Escherichia coli.</title>
        <authorList>
            <person name="Sanangelantoni A.M."/>
            <person name="Forlani G."/>
            <person name="Ambroselli F."/>
            <person name="Cammarano P."/>
            <person name="Tiboni O."/>
        </authorList>
    </citation>
    <scope>NUCLEOTIDE SEQUENCE [GENOMIC DNA]</scope>
    <source>
        <strain>ATCC 43589 / DSM 3109 / JCM 10099 / NBRC 100826 / MSB8</strain>
    </source>
</reference>
<reference key="2">
    <citation type="journal article" date="1999" name="Nature">
        <title>Evidence for lateral gene transfer between Archaea and Bacteria from genome sequence of Thermotoga maritima.</title>
        <authorList>
            <person name="Nelson K.E."/>
            <person name="Clayton R.A."/>
            <person name="Gill S.R."/>
            <person name="Gwinn M.L."/>
            <person name="Dodson R.J."/>
            <person name="Haft D.H."/>
            <person name="Hickey E.K."/>
            <person name="Peterson J.D."/>
            <person name="Nelson W.C."/>
            <person name="Ketchum K.A."/>
            <person name="McDonald L.A."/>
            <person name="Utterback T.R."/>
            <person name="Malek J.A."/>
            <person name="Linher K.D."/>
            <person name="Garrett M.M."/>
            <person name="Stewart A.M."/>
            <person name="Cotton M.D."/>
            <person name="Pratt M.S."/>
            <person name="Phillips C.A."/>
            <person name="Richardson D.L."/>
            <person name="Heidelberg J.F."/>
            <person name="Sutton G.G."/>
            <person name="Fleischmann R.D."/>
            <person name="Eisen J.A."/>
            <person name="White O."/>
            <person name="Salzberg S.L."/>
            <person name="Smith H.O."/>
            <person name="Venter J.C."/>
            <person name="Fraser C.M."/>
        </authorList>
    </citation>
    <scope>NUCLEOTIDE SEQUENCE [LARGE SCALE GENOMIC DNA]</scope>
    <source>
        <strain>ATCC 43589 / DSM 3109 / JCM 10099 / NBRC 100826 / MSB8</strain>
    </source>
</reference>
<protein>
    <recommendedName>
        <fullName evidence="7">Glutamine synthetase</fullName>
        <shortName evidence="7">GS</shortName>
        <ecNumber evidence="2">6.3.1.2</ecNumber>
    </recommendedName>
    <alternativeName>
        <fullName evidence="2">Glutamate--ammonia ligase</fullName>
    </alternativeName>
    <alternativeName>
        <fullName evidence="2">Glutamine synthetase I alpha</fullName>
        <shortName evidence="2">GSI alpha</shortName>
    </alternativeName>
</protein>
<sequence length="439" mass="50035">MTIETIKRIIEEENVRFIRLQFTDINGTLKNLEITPDVFLESWEDGIMFDGSSIEGFVRIEESDMYLKPVLDTFAVLPWTVDGAKSARVICDVYTPDGKPFEGDPRYRLRRMMEKAEQLGYTPYAGPEMEFFILPINEKGEPVPEFLDHGGYFDLLPLSKVEEIRRDIAIALEKMGITVEATHHEVAPSQHEVDFRYDTFLRTADNAQTVKLVIKTMAIFHGYHATFMPKPFYGVNGSGMHVHMSLFRGDKNAFYDPDDPLGLSKELRYFVGGILKHAKALAAVTNPTINSYKRLVPGYEAPVYISWSVGNRSALIRIPKARGKATRLEYRSPDPSCNIYLAFAAILAAGLDGIINKIEPPAPVEENIYHMTSERREELNIESLPGSLKEAVEELKKDDVIIDALGEHIFEKFVEAAEKDWKEFSTYVTNWELQRYLYL</sequence>
<dbReference type="EC" id="6.3.1.2" evidence="2"/>
<dbReference type="EMBL" id="X60160">
    <property type="protein sequence ID" value="CAA42729.1"/>
    <property type="molecule type" value="Genomic_DNA"/>
</dbReference>
<dbReference type="EMBL" id="AE000512">
    <property type="protein sequence ID" value="AAD36024.1"/>
    <property type="molecule type" value="Genomic_DNA"/>
</dbReference>
<dbReference type="PIR" id="B72313">
    <property type="entry name" value="B72313"/>
</dbReference>
<dbReference type="RefSeq" id="NP_228751.1">
    <property type="nucleotide sequence ID" value="NC_000853.1"/>
</dbReference>
<dbReference type="RefSeq" id="WP_004080619.1">
    <property type="nucleotide sequence ID" value="NZ_CP011107.1"/>
</dbReference>
<dbReference type="SMR" id="P36205"/>
<dbReference type="FunCoup" id="P36205">
    <property type="interactions" value="328"/>
</dbReference>
<dbReference type="STRING" id="243274.TM_0943"/>
<dbReference type="PaxDb" id="243274-THEMA_09630"/>
<dbReference type="EnsemblBacteria" id="AAD36024">
    <property type="protein sequence ID" value="AAD36024"/>
    <property type="gene ID" value="TM_0943"/>
</dbReference>
<dbReference type="KEGG" id="tma:TM0943"/>
<dbReference type="KEGG" id="tmi:THEMA_09630"/>
<dbReference type="KEGG" id="tmm:Tmari_0945"/>
<dbReference type="KEGG" id="tmw:THMA_0966"/>
<dbReference type="eggNOG" id="COG0174">
    <property type="taxonomic scope" value="Bacteria"/>
</dbReference>
<dbReference type="InParanoid" id="P36205"/>
<dbReference type="OrthoDB" id="9807095at2"/>
<dbReference type="BioCyc" id="MetaCyc:MONOMER-502"/>
<dbReference type="BRENDA" id="6.3.1.2">
    <property type="organism ID" value="6331"/>
</dbReference>
<dbReference type="Proteomes" id="UP000008183">
    <property type="component" value="Chromosome"/>
</dbReference>
<dbReference type="GO" id="GO:0005737">
    <property type="term" value="C:cytoplasm"/>
    <property type="evidence" value="ECO:0007669"/>
    <property type="project" value="UniProtKB-SubCell"/>
</dbReference>
<dbReference type="GO" id="GO:0005524">
    <property type="term" value="F:ATP binding"/>
    <property type="evidence" value="ECO:0007669"/>
    <property type="project" value="UniProtKB-KW"/>
</dbReference>
<dbReference type="GO" id="GO:0004356">
    <property type="term" value="F:glutamine synthetase activity"/>
    <property type="evidence" value="ECO:0007669"/>
    <property type="project" value="UniProtKB-EC"/>
</dbReference>
<dbReference type="GO" id="GO:0046872">
    <property type="term" value="F:metal ion binding"/>
    <property type="evidence" value="ECO:0007669"/>
    <property type="project" value="UniProtKB-KW"/>
</dbReference>
<dbReference type="GO" id="GO:0006542">
    <property type="term" value="P:glutamine biosynthetic process"/>
    <property type="evidence" value="ECO:0000318"/>
    <property type="project" value="GO_Central"/>
</dbReference>
<dbReference type="FunFam" id="3.10.20.70:FF:000005">
    <property type="entry name" value="Glutamine synthetase"/>
    <property type="match status" value="1"/>
</dbReference>
<dbReference type="FunFam" id="3.30.590.10:FF:000003">
    <property type="entry name" value="Glutamine synthetase 2"/>
    <property type="match status" value="1"/>
</dbReference>
<dbReference type="Gene3D" id="3.10.20.70">
    <property type="entry name" value="Glutamine synthetase, N-terminal domain"/>
    <property type="match status" value="1"/>
</dbReference>
<dbReference type="Gene3D" id="3.30.590.10">
    <property type="entry name" value="Glutamine synthetase/guanido kinase, catalytic domain"/>
    <property type="match status" value="1"/>
</dbReference>
<dbReference type="InterPro" id="IPR008147">
    <property type="entry name" value="Gln_synt_N"/>
</dbReference>
<dbReference type="InterPro" id="IPR036651">
    <property type="entry name" value="Gln_synt_N_sf"/>
</dbReference>
<dbReference type="InterPro" id="IPR014746">
    <property type="entry name" value="Gln_synth/guanido_kin_cat_dom"/>
</dbReference>
<dbReference type="InterPro" id="IPR008146">
    <property type="entry name" value="Gln_synth_cat_dom"/>
</dbReference>
<dbReference type="InterPro" id="IPR027303">
    <property type="entry name" value="Gln_synth_gly_rich_site"/>
</dbReference>
<dbReference type="InterPro" id="IPR004809">
    <property type="entry name" value="Gln_synth_I"/>
</dbReference>
<dbReference type="InterPro" id="IPR027302">
    <property type="entry name" value="Gln_synth_N_conserv_site"/>
</dbReference>
<dbReference type="NCBIfam" id="TIGR00653">
    <property type="entry name" value="GlnA"/>
    <property type="match status" value="1"/>
</dbReference>
<dbReference type="PANTHER" id="PTHR43407">
    <property type="entry name" value="GLUTAMINE SYNTHETASE"/>
    <property type="match status" value="1"/>
</dbReference>
<dbReference type="PANTHER" id="PTHR43407:SF1">
    <property type="entry name" value="LENGSIN"/>
    <property type="match status" value="1"/>
</dbReference>
<dbReference type="Pfam" id="PF00120">
    <property type="entry name" value="Gln-synt_C"/>
    <property type="match status" value="1"/>
</dbReference>
<dbReference type="Pfam" id="PF03951">
    <property type="entry name" value="Gln-synt_N"/>
    <property type="match status" value="1"/>
</dbReference>
<dbReference type="SMART" id="SM01230">
    <property type="entry name" value="Gln-synt_C"/>
    <property type="match status" value="1"/>
</dbReference>
<dbReference type="SUPFAM" id="SSF54368">
    <property type="entry name" value="Glutamine synthetase, N-terminal domain"/>
    <property type="match status" value="1"/>
</dbReference>
<dbReference type="SUPFAM" id="SSF55931">
    <property type="entry name" value="Glutamine synthetase/guanido kinase"/>
    <property type="match status" value="1"/>
</dbReference>
<dbReference type="PROSITE" id="PS00180">
    <property type="entry name" value="GLNA_1"/>
    <property type="match status" value="1"/>
</dbReference>
<dbReference type="PROSITE" id="PS00181">
    <property type="entry name" value="GLNA_ATP"/>
    <property type="match status" value="1"/>
</dbReference>
<dbReference type="PROSITE" id="PS51986">
    <property type="entry name" value="GS_BETA_GRASP"/>
    <property type="match status" value="1"/>
</dbReference>
<dbReference type="PROSITE" id="PS51987">
    <property type="entry name" value="GS_CATALYTIC"/>
    <property type="match status" value="1"/>
</dbReference>
<comment type="function">
    <text evidence="2">Glutamine synthetase (GS) is an unusual multitasking protein that functions as an enzyme, a transcription coregulator, and a chaperone in ammonium assimilation and in the regulation of genes involved in nitrogen metabolism. It catalyzes the ATP-dependent biosynthesis of glutamine from glutamate and ammonia. Feedback-inhibited GlnA also interacts with and regulates the activity of the transcriptional regulator TnrA. During nitrogen limitation, TnrA is in its DNA-binding active state and turns on the transcription of genes required for nitrogen assimilation. Under conditions of nitrogen excess, feedback-inhibited GlnA forms a stable complex with TnrA, which inhibits its DNA-binding activity. In contrast, feedback-inhibited GlnA acts as a chaperone to stabilize the DNA-binding activity of GlnR, which represses the transcription of nitrogen assimilation genes.</text>
</comment>
<comment type="catalytic activity">
    <reaction evidence="2">
        <text>L-glutamate + NH4(+) + ATP = L-glutamine + ADP + phosphate + H(+)</text>
        <dbReference type="Rhea" id="RHEA:16169"/>
        <dbReference type="ChEBI" id="CHEBI:15378"/>
        <dbReference type="ChEBI" id="CHEBI:28938"/>
        <dbReference type="ChEBI" id="CHEBI:29985"/>
        <dbReference type="ChEBI" id="CHEBI:30616"/>
        <dbReference type="ChEBI" id="CHEBI:43474"/>
        <dbReference type="ChEBI" id="CHEBI:58359"/>
        <dbReference type="ChEBI" id="CHEBI:456216"/>
        <dbReference type="EC" id="6.3.1.2"/>
    </reaction>
</comment>
<comment type="cofactor">
    <cofactor evidence="2">
        <name>Mg(2+)</name>
        <dbReference type="ChEBI" id="CHEBI:18420"/>
    </cofactor>
    <text evidence="2">Binds 2 Mg(2+) ions per subunit.</text>
</comment>
<comment type="activity regulation">
    <text evidence="2">Inhibited by glutamine.</text>
</comment>
<comment type="subunit">
    <text evidence="2">Oligomer of 12 subunits arranged in the form of two hexagons. In its feedback-inhibited form, interacts with TnrA in order to block its DNA-binding activity.</text>
</comment>
<comment type="subcellular location">
    <subcellularLocation>
        <location evidence="2">Cytoplasm</location>
    </subcellularLocation>
</comment>
<comment type="similarity">
    <text evidence="8">Belongs to the glutamine synthetase family.</text>
</comment>